<organism>
    <name type="scientific">Pinus leiophylla</name>
    <name type="common">Chihuahua pine</name>
    <dbReference type="NCBI Taxonomy" id="71638"/>
    <lineage>
        <taxon>Eukaryota</taxon>
        <taxon>Viridiplantae</taxon>
        <taxon>Streptophyta</taxon>
        <taxon>Embryophyta</taxon>
        <taxon>Tracheophyta</taxon>
        <taxon>Spermatophyta</taxon>
        <taxon>Pinopsida</taxon>
        <taxon>Pinidae</taxon>
        <taxon>Conifers I</taxon>
        <taxon>Pinales</taxon>
        <taxon>Pinaceae</taxon>
        <taxon>Pinus</taxon>
        <taxon>Pinus subgen. Pinus</taxon>
    </lineage>
</organism>
<proteinExistence type="inferred from homology"/>
<gene>
    <name evidence="1" type="primary">matK</name>
</gene>
<comment type="function">
    <text evidence="1">Usually encoded in the trnK tRNA gene intron. Probably assists in splicing its own and other chloroplast group II introns.</text>
</comment>
<comment type="subcellular location">
    <subcellularLocation>
        <location>Plastid</location>
        <location>Chloroplast</location>
    </subcellularLocation>
</comment>
<comment type="similarity">
    <text evidence="1">Belongs to the intron maturase 2 family. MatK subfamily.</text>
</comment>
<feature type="chain" id="PRO_0000143616" description="Maturase K">
    <location>
        <begin position="1"/>
        <end position="515"/>
    </location>
</feature>
<keyword id="KW-0150">Chloroplast</keyword>
<keyword id="KW-0507">mRNA processing</keyword>
<keyword id="KW-0934">Plastid</keyword>
<keyword id="KW-0694">RNA-binding</keyword>
<keyword id="KW-0819">tRNA processing</keyword>
<dbReference type="EMBL" id="AB081085">
    <property type="protein sequence ID" value="BAC15586.1"/>
    <property type="molecule type" value="Genomic_DNA"/>
</dbReference>
<dbReference type="GO" id="GO:0009507">
    <property type="term" value="C:chloroplast"/>
    <property type="evidence" value="ECO:0007669"/>
    <property type="project" value="UniProtKB-SubCell"/>
</dbReference>
<dbReference type="GO" id="GO:0003723">
    <property type="term" value="F:RNA binding"/>
    <property type="evidence" value="ECO:0007669"/>
    <property type="project" value="UniProtKB-KW"/>
</dbReference>
<dbReference type="GO" id="GO:0006397">
    <property type="term" value="P:mRNA processing"/>
    <property type="evidence" value="ECO:0007669"/>
    <property type="project" value="UniProtKB-KW"/>
</dbReference>
<dbReference type="GO" id="GO:0008380">
    <property type="term" value="P:RNA splicing"/>
    <property type="evidence" value="ECO:0007669"/>
    <property type="project" value="UniProtKB-UniRule"/>
</dbReference>
<dbReference type="GO" id="GO:0008033">
    <property type="term" value="P:tRNA processing"/>
    <property type="evidence" value="ECO:0007669"/>
    <property type="project" value="UniProtKB-KW"/>
</dbReference>
<dbReference type="HAMAP" id="MF_01390">
    <property type="entry name" value="MatK"/>
    <property type="match status" value="1"/>
</dbReference>
<dbReference type="InterPro" id="IPR024937">
    <property type="entry name" value="Domain_X"/>
</dbReference>
<dbReference type="InterPro" id="IPR002866">
    <property type="entry name" value="Maturase_MatK"/>
</dbReference>
<dbReference type="InterPro" id="IPR024942">
    <property type="entry name" value="Maturase_MatK_N"/>
</dbReference>
<dbReference type="PANTHER" id="PTHR34811">
    <property type="entry name" value="MATURASE K"/>
    <property type="match status" value="1"/>
</dbReference>
<dbReference type="PANTHER" id="PTHR34811:SF1">
    <property type="entry name" value="MATURASE K"/>
    <property type="match status" value="1"/>
</dbReference>
<dbReference type="Pfam" id="PF01348">
    <property type="entry name" value="Intron_maturas2"/>
    <property type="match status" value="1"/>
</dbReference>
<dbReference type="Pfam" id="PF01824">
    <property type="entry name" value="MatK_N"/>
    <property type="match status" value="1"/>
</dbReference>
<reference key="1">
    <citation type="submission" date="2002-03" db="EMBL/GenBank/DDBJ databases">
        <title>Phylogeny of the North American pines.</title>
        <authorList>
            <person name="Geada Lopez G."/>
            <person name="Kamiya K."/>
            <person name="Harada K."/>
        </authorList>
    </citation>
    <scope>NUCLEOTIDE SEQUENCE [GENOMIC DNA]</scope>
    <source>
        <tissue>Leaf</tissue>
    </source>
</reference>
<geneLocation type="chloroplast"/>
<sequence length="515" mass="61066">MDEFHRCGKEDSFWQQCFLYPLFFQEDLYAISHDHYLDVSSSSRPMEHLSSNDQLSFLTVKRLIGQIRQQNNSIVLFVNCDPNPLADRKKSFYSESVLEALTLVLEVPFSIWSKYSVEGMNESKSFRSIHSIFPFLEDKFPHSNSILDARIPYYIHPEILVRTFRRWIRDAPSLHPLRSVLYEYRNSPDNLQRSIIVVPRVNTRFFLFLWNYYVCECESILFSRLKRSSHSRSLTHGSLPQRTHFHRKIKHIIIFSRRNSLKSIWSLKDPKIHYVRYGERPIIAIKGAHLLVKKCRYYLLIFRQFYFHLWSEPYRVCSHQLSKNCSSSPGYFLRVRMNPILVRTKMLDELFIADLITDEIDPIVPIVPIIGLLATEKFCDISGRPISKLSWTSLTDDDILDRFDQIWRNLFHYYSGSFDRDGLYRIKYILSLSCAKTLACKHKSTIRVVRKELGPELFKKSFSKEREFYSLRFSSKAAARSQRERIWHSDIPQINPLANSWQKIQDLKIENLFDQ</sequence>
<accession>Q8HQR1</accession>
<evidence type="ECO:0000255" key="1">
    <source>
        <dbReference type="HAMAP-Rule" id="MF_01390"/>
    </source>
</evidence>
<name>MATK_PINLE</name>
<protein>
    <recommendedName>
        <fullName evidence="1">Maturase K</fullName>
    </recommendedName>
    <alternativeName>
        <fullName evidence="1">Intron maturase</fullName>
    </alternativeName>
</protein>